<organism>
    <name type="scientific">Opitutus terrae (strain DSM 11246 / JCM 15787 / PB90-1)</name>
    <dbReference type="NCBI Taxonomy" id="452637"/>
    <lineage>
        <taxon>Bacteria</taxon>
        <taxon>Pseudomonadati</taxon>
        <taxon>Verrucomicrobiota</taxon>
        <taxon>Opitutia</taxon>
        <taxon>Opitutales</taxon>
        <taxon>Opitutaceae</taxon>
        <taxon>Opitutus</taxon>
    </lineage>
</organism>
<protein>
    <recommendedName>
        <fullName evidence="2">Small ribosomal subunit protein uS12</fullName>
    </recommendedName>
    <alternativeName>
        <fullName evidence="4">30S ribosomal protein S12</fullName>
    </alternativeName>
</protein>
<keyword id="KW-0488">Methylation</keyword>
<keyword id="KW-1185">Reference proteome</keyword>
<keyword id="KW-0687">Ribonucleoprotein</keyword>
<keyword id="KW-0689">Ribosomal protein</keyword>
<keyword id="KW-0694">RNA-binding</keyword>
<keyword id="KW-0699">rRNA-binding</keyword>
<keyword id="KW-0820">tRNA-binding</keyword>
<reference key="1">
    <citation type="journal article" date="2011" name="J. Bacteriol.">
        <title>Genome sequence of the verrucomicrobium Opitutus terrae PB90-1, an abundant inhabitant of rice paddy soil ecosystems.</title>
        <authorList>
            <person name="van Passel M.W."/>
            <person name="Kant R."/>
            <person name="Palva A."/>
            <person name="Copeland A."/>
            <person name="Lucas S."/>
            <person name="Lapidus A."/>
            <person name="Glavina del Rio T."/>
            <person name="Pitluck S."/>
            <person name="Goltsman E."/>
            <person name="Clum A."/>
            <person name="Sun H."/>
            <person name="Schmutz J."/>
            <person name="Larimer F.W."/>
            <person name="Land M.L."/>
            <person name="Hauser L."/>
            <person name="Kyrpides N."/>
            <person name="Mikhailova N."/>
            <person name="Richardson P.P."/>
            <person name="Janssen P.H."/>
            <person name="de Vos W.M."/>
            <person name="Smidt H."/>
        </authorList>
    </citation>
    <scope>NUCLEOTIDE SEQUENCE [LARGE SCALE GENOMIC DNA]</scope>
    <source>
        <strain>DSM 11246 / JCM 15787 / PB90-1</strain>
    </source>
</reference>
<dbReference type="EMBL" id="CP001032">
    <property type="protein sequence ID" value="ACB73521.1"/>
    <property type="molecule type" value="Genomic_DNA"/>
</dbReference>
<dbReference type="RefSeq" id="WP_012373059.1">
    <property type="nucleotide sequence ID" value="NC_010571.1"/>
</dbReference>
<dbReference type="SMR" id="B1ZNF2"/>
<dbReference type="STRING" id="452637.Oter_0230"/>
<dbReference type="KEGG" id="ote:Oter_0230"/>
<dbReference type="eggNOG" id="COG0048">
    <property type="taxonomic scope" value="Bacteria"/>
</dbReference>
<dbReference type="HOGENOM" id="CLU_104295_1_2_0"/>
<dbReference type="OrthoDB" id="9802366at2"/>
<dbReference type="Proteomes" id="UP000007013">
    <property type="component" value="Chromosome"/>
</dbReference>
<dbReference type="GO" id="GO:0015935">
    <property type="term" value="C:small ribosomal subunit"/>
    <property type="evidence" value="ECO:0007669"/>
    <property type="project" value="InterPro"/>
</dbReference>
<dbReference type="GO" id="GO:0019843">
    <property type="term" value="F:rRNA binding"/>
    <property type="evidence" value="ECO:0007669"/>
    <property type="project" value="UniProtKB-UniRule"/>
</dbReference>
<dbReference type="GO" id="GO:0003735">
    <property type="term" value="F:structural constituent of ribosome"/>
    <property type="evidence" value="ECO:0007669"/>
    <property type="project" value="InterPro"/>
</dbReference>
<dbReference type="GO" id="GO:0000049">
    <property type="term" value="F:tRNA binding"/>
    <property type="evidence" value="ECO:0007669"/>
    <property type="project" value="UniProtKB-UniRule"/>
</dbReference>
<dbReference type="GO" id="GO:0006412">
    <property type="term" value="P:translation"/>
    <property type="evidence" value="ECO:0007669"/>
    <property type="project" value="UniProtKB-UniRule"/>
</dbReference>
<dbReference type="CDD" id="cd03368">
    <property type="entry name" value="Ribosomal_S12"/>
    <property type="match status" value="1"/>
</dbReference>
<dbReference type="FunFam" id="2.40.50.140:FF:000001">
    <property type="entry name" value="30S ribosomal protein S12"/>
    <property type="match status" value="1"/>
</dbReference>
<dbReference type="Gene3D" id="2.40.50.140">
    <property type="entry name" value="Nucleic acid-binding proteins"/>
    <property type="match status" value="1"/>
</dbReference>
<dbReference type="HAMAP" id="MF_00403_B">
    <property type="entry name" value="Ribosomal_uS12_B"/>
    <property type="match status" value="1"/>
</dbReference>
<dbReference type="InterPro" id="IPR012340">
    <property type="entry name" value="NA-bd_OB-fold"/>
</dbReference>
<dbReference type="InterPro" id="IPR006032">
    <property type="entry name" value="Ribosomal_uS12"/>
</dbReference>
<dbReference type="InterPro" id="IPR005679">
    <property type="entry name" value="Ribosomal_uS12_bac"/>
</dbReference>
<dbReference type="NCBIfam" id="TIGR00981">
    <property type="entry name" value="rpsL_bact"/>
    <property type="match status" value="1"/>
</dbReference>
<dbReference type="PANTHER" id="PTHR11652">
    <property type="entry name" value="30S RIBOSOMAL PROTEIN S12 FAMILY MEMBER"/>
    <property type="match status" value="1"/>
</dbReference>
<dbReference type="Pfam" id="PF00164">
    <property type="entry name" value="Ribosom_S12_S23"/>
    <property type="match status" value="1"/>
</dbReference>
<dbReference type="PIRSF" id="PIRSF002133">
    <property type="entry name" value="Ribosomal_S12/S23"/>
    <property type="match status" value="1"/>
</dbReference>
<dbReference type="PRINTS" id="PR01034">
    <property type="entry name" value="RIBOSOMALS12"/>
</dbReference>
<dbReference type="SUPFAM" id="SSF50249">
    <property type="entry name" value="Nucleic acid-binding proteins"/>
    <property type="match status" value="1"/>
</dbReference>
<dbReference type="PROSITE" id="PS00055">
    <property type="entry name" value="RIBOSOMAL_S12"/>
    <property type="match status" value="1"/>
</dbReference>
<name>RS12_OPITP</name>
<sequence>MPTINQLVRKGRRKVRTKSKSPALDGNPFRRGVCVQVMTRTPKKPNSAIRKVAKVRLTNGNEVISYIPDEGHNLQEHSIVLVRGGRVKDLPGVRYHIVRGTLDATGVEKRRRSRSKYGVKRPKAAK</sequence>
<evidence type="ECO:0000250" key="1"/>
<evidence type="ECO:0000255" key="2">
    <source>
        <dbReference type="HAMAP-Rule" id="MF_00403"/>
    </source>
</evidence>
<evidence type="ECO:0000256" key="3">
    <source>
        <dbReference type="SAM" id="MobiDB-lite"/>
    </source>
</evidence>
<evidence type="ECO:0000305" key="4"/>
<proteinExistence type="inferred from homology"/>
<comment type="function">
    <text evidence="2">With S4 and S5 plays an important role in translational accuracy.</text>
</comment>
<comment type="function">
    <text evidence="2">Interacts with and stabilizes bases of the 16S rRNA that are involved in tRNA selection in the A site and with the mRNA backbone. Located at the interface of the 30S and 50S subunits, it traverses the body of the 30S subunit contacting proteins on the other side and probably holding the rRNA structure together. The combined cluster of proteins S8, S12 and S17 appears to hold together the shoulder and platform of the 30S subunit.</text>
</comment>
<comment type="subunit">
    <text evidence="2">Part of the 30S ribosomal subunit. Contacts proteins S8 and S17. May interact with IF1 in the 30S initiation complex.</text>
</comment>
<comment type="similarity">
    <text evidence="2">Belongs to the universal ribosomal protein uS12 family.</text>
</comment>
<accession>B1ZNF2</accession>
<gene>
    <name evidence="2" type="primary">rpsL</name>
    <name type="ordered locus">Oter_0230</name>
</gene>
<feature type="chain" id="PRO_1000194201" description="Small ribosomal subunit protein uS12">
    <location>
        <begin position="1"/>
        <end position="126"/>
    </location>
</feature>
<feature type="region of interest" description="Disordered" evidence="3">
    <location>
        <begin position="1"/>
        <end position="28"/>
    </location>
</feature>
<feature type="region of interest" description="Disordered" evidence="3">
    <location>
        <begin position="106"/>
        <end position="126"/>
    </location>
</feature>
<feature type="compositionally biased region" description="Basic residues" evidence="3">
    <location>
        <begin position="9"/>
        <end position="19"/>
    </location>
</feature>
<feature type="compositionally biased region" description="Basic residues" evidence="3">
    <location>
        <begin position="109"/>
        <end position="126"/>
    </location>
</feature>
<feature type="modified residue" description="3-methylthioaspartic acid" evidence="1">
    <location>
        <position position="89"/>
    </location>
</feature>